<name>Y093_PSEF5</name>
<evidence type="ECO:0000255" key="1">
    <source>
        <dbReference type="HAMAP-Rule" id="MF_01361"/>
    </source>
</evidence>
<organism>
    <name type="scientific">Pseudomonas fluorescens (strain ATCC BAA-477 / NRRL B-23932 / Pf-5)</name>
    <dbReference type="NCBI Taxonomy" id="220664"/>
    <lineage>
        <taxon>Bacteria</taxon>
        <taxon>Pseudomonadati</taxon>
        <taxon>Pseudomonadota</taxon>
        <taxon>Gammaproteobacteria</taxon>
        <taxon>Pseudomonadales</taxon>
        <taxon>Pseudomonadaceae</taxon>
        <taxon>Pseudomonas</taxon>
    </lineage>
</organism>
<dbReference type="EMBL" id="CP000076">
    <property type="protein sequence ID" value="AAY95510.1"/>
    <property type="molecule type" value="Genomic_DNA"/>
</dbReference>
<dbReference type="RefSeq" id="WP_003170804.1">
    <property type="nucleotide sequence ID" value="NC_004129.6"/>
</dbReference>
<dbReference type="STRING" id="220664.PFL_0093"/>
<dbReference type="KEGG" id="pfl:PFL_0093"/>
<dbReference type="eggNOG" id="COG5487">
    <property type="taxonomic scope" value="Bacteria"/>
</dbReference>
<dbReference type="HOGENOM" id="CLU_187346_2_1_6"/>
<dbReference type="Proteomes" id="UP000008540">
    <property type="component" value="Chromosome"/>
</dbReference>
<dbReference type="GO" id="GO:0005886">
    <property type="term" value="C:plasma membrane"/>
    <property type="evidence" value="ECO:0007669"/>
    <property type="project" value="UniProtKB-SubCell"/>
</dbReference>
<dbReference type="HAMAP" id="MF_01361">
    <property type="entry name" value="UPF0391"/>
    <property type="match status" value="1"/>
</dbReference>
<dbReference type="InterPro" id="IPR009760">
    <property type="entry name" value="DUF1328"/>
</dbReference>
<dbReference type="NCBIfam" id="NF010226">
    <property type="entry name" value="PRK13682.1-1"/>
    <property type="match status" value="1"/>
</dbReference>
<dbReference type="NCBIfam" id="NF010229">
    <property type="entry name" value="PRK13682.1-4"/>
    <property type="match status" value="1"/>
</dbReference>
<dbReference type="Pfam" id="PF07043">
    <property type="entry name" value="DUF1328"/>
    <property type="match status" value="1"/>
</dbReference>
<dbReference type="PIRSF" id="PIRSF036466">
    <property type="entry name" value="UCP036466"/>
    <property type="match status" value="1"/>
</dbReference>
<protein>
    <recommendedName>
        <fullName evidence="1">UPF0391 membrane protein PFL_0093</fullName>
    </recommendedName>
</protein>
<proteinExistence type="inferred from homology"/>
<feature type="chain" id="PRO_0000256760" description="UPF0391 membrane protein PFL_0093">
    <location>
        <begin position="1"/>
        <end position="54"/>
    </location>
</feature>
<feature type="transmembrane region" description="Helical" evidence="1">
    <location>
        <begin position="4"/>
        <end position="24"/>
    </location>
</feature>
<feature type="transmembrane region" description="Helical" evidence="1">
    <location>
        <begin position="29"/>
        <end position="49"/>
    </location>
</feature>
<reference key="1">
    <citation type="journal article" date="2005" name="Nat. Biotechnol.">
        <title>Complete genome sequence of the plant commensal Pseudomonas fluorescens Pf-5.</title>
        <authorList>
            <person name="Paulsen I.T."/>
            <person name="Press C.M."/>
            <person name="Ravel J."/>
            <person name="Kobayashi D.Y."/>
            <person name="Myers G.S.A."/>
            <person name="Mavrodi D.V."/>
            <person name="DeBoy R.T."/>
            <person name="Seshadri R."/>
            <person name="Ren Q."/>
            <person name="Madupu R."/>
            <person name="Dodson R.J."/>
            <person name="Durkin A.S."/>
            <person name="Brinkac L.M."/>
            <person name="Daugherty S.C."/>
            <person name="Sullivan S.A."/>
            <person name="Rosovitz M.J."/>
            <person name="Gwinn M.L."/>
            <person name="Zhou L."/>
            <person name="Schneider D.J."/>
            <person name="Cartinhour S.W."/>
            <person name="Nelson W.C."/>
            <person name="Weidman J."/>
            <person name="Watkins K."/>
            <person name="Tran K."/>
            <person name="Khouri H."/>
            <person name="Pierson E.A."/>
            <person name="Pierson L.S. III"/>
            <person name="Thomashow L.S."/>
            <person name="Loper J.E."/>
        </authorList>
    </citation>
    <scope>NUCLEOTIDE SEQUENCE [LARGE SCALE GENOMIC DNA]</scope>
    <source>
        <strain>ATCC BAA-477 / NRRL B-23932 / Pf-5</strain>
    </source>
</reference>
<accession>Q4KKI8</accession>
<comment type="subcellular location">
    <subcellularLocation>
        <location evidence="1">Cell membrane</location>
        <topology evidence="1">Multi-pass membrane protein</topology>
    </subcellularLocation>
</comment>
<comment type="similarity">
    <text evidence="1">Belongs to the UPF0391 family.</text>
</comment>
<gene>
    <name type="ordered locus">PFL_0093</name>
</gene>
<keyword id="KW-1003">Cell membrane</keyword>
<keyword id="KW-0472">Membrane</keyword>
<keyword id="KW-0812">Transmembrane</keyword>
<keyword id="KW-1133">Transmembrane helix</keyword>
<sequence>MLSWAITFLIIAIVAAVLGFGGIAGTATGIAKILFVVFLVMFIASFFFGRRGRG</sequence>